<feature type="chain" id="PRO_0000320630" description="Leucine-rich repeat-containing protein 63">
    <location>
        <begin position="1"/>
        <end position="607"/>
    </location>
</feature>
<feature type="repeat" description="LRR 1">
    <location>
        <begin position="357"/>
        <end position="378"/>
    </location>
</feature>
<feature type="repeat" description="LRR 2">
    <location>
        <begin position="380"/>
        <end position="401"/>
    </location>
</feature>
<feature type="repeat" description="LRR 3">
    <location>
        <begin position="403"/>
        <end position="424"/>
    </location>
</feature>
<feature type="repeat" description="LRR 4">
    <location>
        <begin position="426"/>
        <end position="447"/>
    </location>
</feature>
<feature type="repeat" description="LRR 5">
    <location>
        <begin position="449"/>
        <end position="470"/>
    </location>
</feature>
<feature type="repeat" description="LRR 6">
    <location>
        <begin position="471"/>
        <end position="497"/>
    </location>
</feature>
<feature type="repeat" description="LRR 7">
    <location>
        <begin position="498"/>
        <end position="524"/>
    </location>
</feature>
<keyword id="KW-0433">Leucine-rich repeat</keyword>
<keyword id="KW-1185">Reference proteome</keyword>
<keyword id="KW-0677">Repeat</keyword>
<name>LRC63_RAT</name>
<accession>Q4V8G0</accession>
<dbReference type="EMBL" id="BC097406">
    <property type="protein sequence ID" value="AAH97406.1"/>
    <property type="molecule type" value="mRNA"/>
</dbReference>
<dbReference type="RefSeq" id="NP_001019974.1">
    <property type="nucleotide sequence ID" value="NM_001024803.1"/>
</dbReference>
<dbReference type="RefSeq" id="XP_006252387.1">
    <property type="nucleotide sequence ID" value="XM_006252325.5"/>
</dbReference>
<dbReference type="RefSeq" id="XP_006252388.1">
    <property type="nucleotide sequence ID" value="XM_006252326.5"/>
</dbReference>
<dbReference type="RefSeq" id="XP_006252389.1">
    <property type="nucleotide sequence ID" value="XM_006252327.5"/>
</dbReference>
<dbReference type="SMR" id="Q4V8G0"/>
<dbReference type="FunCoup" id="Q4V8G0">
    <property type="interactions" value="37"/>
</dbReference>
<dbReference type="STRING" id="10116.ENSRNOP00000072416"/>
<dbReference type="PhosphoSitePlus" id="Q4V8G0"/>
<dbReference type="PaxDb" id="10116-ENSRNOP00000055096"/>
<dbReference type="Ensembl" id="ENSRNOT00000058294.3">
    <property type="protein sequence ID" value="ENSRNOP00000055096.2"/>
    <property type="gene ID" value="ENSRNOG00000038291.4"/>
</dbReference>
<dbReference type="GeneID" id="364427"/>
<dbReference type="KEGG" id="rno:364427"/>
<dbReference type="UCSC" id="RGD:1559507">
    <property type="organism name" value="rat"/>
</dbReference>
<dbReference type="AGR" id="RGD:1559507"/>
<dbReference type="CTD" id="220416"/>
<dbReference type="RGD" id="1559507">
    <property type="gene designation" value="Lrrc63"/>
</dbReference>
<dbReference type="eggNOG" id="KOG0619">
    <property type="taxonomic scope" value="Eukaryota"/>
</dbReference>
<dbReference type="GeneTree" id="ENSGT00710000106860"/>
<dbReference type="HOGENOM" id="CLU_027651_0_0_1"/>
<dbReference type="InParanoid" id="Q4V8G0"/>
<dbReference type="OMA" id="YWHIPET"/>
<dbReference type="PhylomeDB" id="Q4V8G0"/>
<dbReference type="TreeFam" id="TF329649"/>
<dbReference type="PRO" id="PR:Q4V8G0"/>
<dbReference type="Proteomes" id="UP000002494">
    <property type="component" value="Chromosome 15"/>
</dbReference>
<dbReference type="Bgee" id="ENSRNOG00000038291">
    <property type="expression patterns" value="Expressed in testis and 2 other cell types or tissues"/>
</dbReference>
<dbReference type="ExpressionAtlas" id="Q4V8G0">
    <property type="expression patterns" value="baseline"/>
</dbReference>
<dbReference type="GO" id="GO:0035556">
    <property type="term" value="P:intracellular signal transduction"/>
    <property type="evidence" value="ECO:0000318"/>
    <property type="project" value="GO_Central"/>
</dbReference>
<dbReference type="Gene3D" id="3.80.10.10">
    <property type="entry name" value="Ribonuclease Inhibitor"/>
    <property type="match status" value="1"/>
</dbReference>
<dbReference type="InterPro" id="IPR001611">
    <property type="entry name" value="Leu-rich_rpt"/>
</dbReference>
<dbReference type="InterPro" id="IPR003591">
    <property type="entry name" value="Leu-rich_rpt_typical-subtyp"/>
</dbReference>
<dbReference type="InterPro" id="IPR032675">
    <property type="entry name" value="LRR_dom_sf"/>
</dbReference>
<dbReference type="InterPro" id="IPR050216">
    <property type="entry name" value="LRR_domain-containing"/>
</dbReference>
<dbReference type="InterPro" id="IPR055414">
    <property type="entry name" value="LRR_R13L4/SHOC2-like"/>
</dbReference>
<dbReference type="PANTHER" id="PTHR48051">
    <property type="match status" value="1"/>
</dbReference>
<dbReference type="PANTHER" id="PTHR48051:SF62">
    <property type="entry name" value="LEUCINE-RICH REPEAT-CONTAINING PROTEIN 57"/>
    <property type="match status" value="1"/>
</dbReference>
<dbReference type="Pfam" id="PF23598">
    <property type="entry name" value="LRR_14"/>
    <property type="match status" value="1"/>
</dbReference>
<dbReference type="SMART" id="SM00369">
    <property type="entry name" value="LRR_TYP"/>
    <property type="match status" value="4"/>
</dbReference>
<dbReference type="SUPFAM" id="SSF52047">
    <property type="entry name" value="RNI-like"/>
    <property type="match status" value="1"/>
</dbReference>
<dbReference type="PROSITE" id="PS51450">
    <property type="entry name" value="LRR"/>
    <property type="match status" value="4"/>
</dbReference>
<proteinExistence type="evidence at transcript level"/>
<protein>
    <recommendedName>
        <fullName>Leucine-rich repeat-containing protein 63</fullName>
    </recommendedName>
</protein>
<sequence>MRKRIYHSFKTQQHPLLLRRPLPPKLPKLPLVKKKVRIVQTGSAREPQEARRKFDTEESALVKIDQSVSQPQKPASVQNVCLDYEHDEPERVVNIFPHPHGVRRLHWKVPKSAAGSMFIPRCLSASSRVFRKTLSQIKRARKSLKSKQDEDLTKKPFSNTLVISEELSKPLPPSYSRLIASRFKHSGTKFRPAPKISHYIQELPLLKDVKETVLSPISSASSAIPEPEWSERPLPKTTIGKVIQLNTGSLPPAHSLPTPALPRKPPRQIMIENAVMTRKTETQKPVEITLRPTRRLDPDAHVLRGDGFKAVGATRSETILALTTLAIINCQIYGRNALNFKGFFLAQCPDLTSVAFQLVYLNLSYNDLHQFPGEVLYLQNLQVLKLRNNPIREIPSEIQQLKYLRKFTIAFNFITSLPAGLFCLNYLEELDVSYNEIENIPNEIQKLRSLEKLTVDGTNITAFPPGILKLNLVKLEFENTFTIPPFWLENSCNNPPRLTHICSLFIVKNNLHKILDYDPVVVQKYLISTSDCDWCHGPKFGEGFGIIRSCNIFGLSHVPIKFHVCSLSCYLEIRESSFVLEGFPSRRIALNMDWVKERKVSNVSFYL</sequence>
<reference key="1">
    <citation type="journal article" date="2004" name="Genome Res.">
        <title>The status, quality, and expansion of the NIH full-length cDNA project: the Mammalian Gene Collection (MGC).</title>
        <authorList>
            <consortium name="The MGC Project Team"/>
        </authorList>
    </citation>
    <scope>NUCLEOTIDE SEQUENCE [LARGE SCALE MRNA]</scope>
    <source>
        <tissue>Testis</tissue>
    </source>
</reference>
<organism>
    <name type="scientific">Rattus norvegicus</name>
    <name type="common">Rat</name>
    <dbReference type="NCBI Taxonomy" id="10116"/>
    <lineage>
        <taxon>Eukaryota</taxon>
        <taxon>Metazoa</taxon>
        <taxon>Chordata</taxon>
        <taxon>Craniata</taxon>
        <taxon>Vertebrata</taxon>
        <taxon>Euteleostomi</taxon>
        <taxon>Mammalia</taxon>
        <taxon>Eutheria</taxon>
        <taxon>Euarchontoglires</taxon>
        <taxon>Glires</taxon>
        <taxon>Rodentia</taxon>
        <taxon>Myomorpha</taxon>
        <taxon>Muroidea</taxon>
        <taxon>Muridae</taxon>
        <taxon>Murinae</taxon>
        <taxon>Rattus</taxon>
    </lineage>
</organism>
<gene>
    <name type="primary">Lrrc63</name>
</gene>